<gene>
    <name evidence="1" type="primary">rimM</name>
    <name type="ordered locus">MCA0393</name>
</gene>
<reference key="1">
    <citation type="journal article" date="2004" name="PLoS Biol.">
        <title>Genomic insights into methanotrophy: the complete genome sequence of Methylococcus capsulatus (Bath).</title>
        <authorList>
            <person name="Ward N.L."/>
            <person name="Larsen O."/>
            <person name="Sakwa J."/>
            <person name="Bruseth L."/>
            <person name="Khouri H.M."/>
            <person name="Durkin A.S."/>
            <person name="Dimitrov G."/>
            <person name="Jiang L."/>
            <person name="Scanlan D."/>
            <person name="Kang K.H."/>
            <person name="Lewis M.R."/>
            <person name="Nelson K.E."/>
            <person name="Methe B.A."/>
            <person name="Wu M."/>
            <person name="Heidelberg J.F."/>
            <person name="Paulsen I.T."/>
            <person name="Fouts D.E."/>
            <person name="Ravel J."/>
            <person name="Tettelin H."/>
            <person name="Ren Q."/>
            <person name="Read T.D."/>
            <person name="DeBoy R.T."/>
            <person name="Seshadri R."/>
            <person name="Salzberg S.L."/>
            <person name="Jensen H.B."/>
            <person name="Birkeland N.K."/>
            <person name="Nelson W.C."/>
            <person name="Dodson R.J."/>
            <person name="Grindhaug S.H."/>
            <person name="Holt I.E."/>
            <person name="Eidhammer I."/>
            <person name="Jonasen I."/>
            <person name="Vanaken S."/>
            <person name="Utterback T.R."/>
            <person name="Feldblyum T.V."/>
            <person name="Fraser C.M."/>
            <person name="Lillehaug J.R."/>
            <person name="Eisen J.A."/>
        </authorList>
    </citation>
    <scope>NUCLEOTIDE SEQUENCE [LARGE SCALE GENOMIC DNA]</scope>
    <source>
        <strain>ATCC 33009 / NCIMB 11132 / Bath</strain>
    </source>
</reference>
<protein>
    <recommendedName>
        <fullName evidence="1">Ribosome maturation factor RimM</fullName>
    </recommendedName>
</protein>
<proteinExistence type="inferred from homology"/>
<organism>
    <name type="scientific">Methylococcus capsulatus (strain ATCC 33009 / NCIMB 11132 / Bath)</name>
    <dbReference type="NCBI Taxonomy" id="243233"/>
    <lineage>
        <taxon>Bacteria</taxon>
        <taxon>Pseudomonadati</taxon>
        <taxon>Pseudomonadota</taxon>
        <taxon>Gammaproteobacteria</taxon>
        <taxon>Methylococcales</taxon>
        <taxon>Methylococcaceae</taxon>
        <taxon>Methylococcus</taxon>
    </lineage>
</organism>
<comment type="function">
    <text evidence="1">An accessory protein needed during the final step in the assembly of 30S ribosomal subunit, possibly for assembly of the head region. Essential for efficient processing of 16S rRNA. May be needed both before and after RbfA during the maturation of 16S rRNA. It has affinity for free ribosomal 30S subunits but not for 70S ribosomes.</text>
</comment>
<comment type="subunit">
    <text evidence="1">Binds ribosomal protein uS19.</text>
</comment>
<comment type="subcellular location">
    <subcellularLocation>
        <location evidence="1">Cytoplasm</location>
    </subcellularLocation>
</comment>
<comment type="domain">
    <text evidence="1">The PRC barrel domain binds ribosomal protein uS19.</text>
</comment>
<comment type="similarity">
    <text evidence="1">Belongs to the RimM family.</text>
</comment>
<evidence type="ECO:0000255" key="1">
    <source>
        <dbReference type="HAMAP-Rule" id="MF_00014"/>
    </source>
</evidence>
<accession>Q60BS2</accession>
<dbReference type="EMBL" id="AE017282">
    <property type="protein sequence ID" value="AAU90471.1"/>
    <property type="molecule type" value="Genomic_DNA"/>
</dbReference>
<dbReference type="RefSeq" id="WP_010959753.1">
    <property type="nucleotide sequence ID" value="NC_002977.6"/>
</dbReference>
<dbReference type="SMR" id="Q60BS2"/>
<dbReference type="STRING" id="243233.MCA0393"/>
<dbReference type="GeneID" id="88222735"/>
<dbReference type="KEGG" id="mca:MCA0393"/>
<dbReference type="eggNOG" id="COG0806">
    <property type="taxonomic scope" value="Bacteria"/>
</dbReference>
<dbReference type="HOGENOM" id="CLU_077636_1_0_6"/>
<dbReference type="Proteomes" id="UP000006821">
    <property type="component" value="Chromosome"/>
</dbReference>
<dbReference type="GO" id="GO:0005737">
    <property type="term" value="C:cytoplasm"/>
    <property type="evidence" value="ECO:0007669"/>
    <property type="project" value="UniProtKB-SubCell"/>
</dbReference>
<dbReference type="GO" id="GO:0005840">
    <property type="term" value="C:ribosome"/>
    <property type="evidence" value="ECO:0007669"/>
    <property type="project" value="InterPro"/>
</dbReference>
<dbReference type="GO" id="GO:0043022">
    <property type="term" value="F:ribosome binding"/>
    <property type="evidence" value="ECO:0007669"/>
    <property type="project" value="InterPro"/>
</dbReference>
<dbReference type="GO" id="GO:0042274">
    <property type="term" value="P:ribosomal small subunit biogenesis"/>
    <property type="evidence" value="ECO:0007669"/>
    <property type="project" value="UniProtKB-UniRule"/>
</dbReference>
<dbReference type="GO" id="GO:0006364">
    <property type="term" value="P:rRNA processing"/>
    <property type="evidence" value="ECO:0007669"/>
    <property type="project" value="UniProtKB-UniRule"/>
</dbReference>
<dbReference type="Gene3D" id="2.30.30.240">
    <property type="entry name" value="PRC-barrel domain"/>
    <property type="match status" value="1"/>
</dbReference>
<dbReference type="Gene3D" id="2.40.30.60">
    <property type="entry name" value="RimM"/>
    <property type="match status" value="1"/>
</dbReference>
<dbReference type="HAMAP" id="MF_00014">
    <property type="entry name" value="Ribosome_mat_RimM"/>
    <property type="match status" value="1"/>
</dbReference>
<dbReference type="InterPro" id="IPR011033">
    <property type="entry name" value="PRC_barrel-like_sf"/>
</dbReference>
<dbReference type="InterPro" id="IPR056792">
    <property type="entry name" value="PRC_RimM"/>
</dbReference>
<dbReference type="InterPro" id="IPR011961">
    <property type="entry name" value="RimM"/>
</dbReference>
<dbReference type="InterPro" id="IPR002676">
    <property type="entry name" value="RimM_N"/>
</dbReference>
<dbReference type="InterPro" id="IPR036976">
    <property type="entry name" value="RimM_N_sf"/>
</dbReference>
<dbReference type="InterPro" id="IPR009000">
    <property type="entry name" value="Transl_B-barrel_sf"/>
</dbReference>
<dbReference type="NCBIfam" id="TIGR02273">
    <property type="entry name" value="16S_RimM"/>
    <property type="match status" value="1"/>
</dbReference>
<dbReference type="PANTHER" id="PTHR33692">
    <property type="entry name" value="RIBOSOME MATURATION FACTOR RIMM"/>
    <property type="match status" value="1"/>
</dbReference>
<dbReference type="PANTHER" id="PTHR33692:SF1">
    <property type="entry name" value="RIBOSOME MATURATION FACTOR RIMM"/>
    <property type="match status" value="1"/>
</dbReference>
<dbReference type="Pfam" id="PF24986">
    <property type="entry name" value="PRC_RimM"/>
    <property type="match status" value="1"/>
</dbReference>
<dbReference type="Pfam" id="PF01782">
    <property type="entry name" value="RimM"/>
    <property type="match status" value="1"/>
</dbReference>
<dbReference type="SUPFAM" id="SSF50346">
    <property type="entry name" value="PRC-barrel domain"/>
    <property type="match status" value="1"/>
</dbReference>
<dbReference type="SUPFAM" id="SSF50447">
    <property type="entry name" value="Translation proteins"/>
    <property type="match status" value="1"/>
</dbReference>
<sequence>MPGNSGNDRSVVVGRVSGAFGVRGWVKAVSFTDPPVNLVGYRPWTLRRGDAERRADVLEGREHGNAVIVRLQGVDTREQAEALKGFEVTVRRSQLPPPAPGEYYRVDLVGLKVVNLGETVLGEVVDVMETGANDVLVVQGDRERLLPFVQGVFVKSVNLEESRIVVDWDPGF</sequence>
<name>RIMM_METCA</name>
<keyword id="KW-0143">Chaperone</keyword>
<keyword id="KW-0963">Cytoplasm</keyword>
<keyword id="KW-1185">Reference proteome</keyword>
<keyword id="KW-0690">Ribosome biogenesis</keyword>
<keyword id="KW-0698">rRNA processing</keyword>
<feature type="chain" id="PRO_0000163316" description="Ribosome maturation factor RimM">
    <location>
        <begin position="1"/>
        <end position="172"/>
    </location>
</feature>
<feature type="domain" description="PRC barrel" evidence="1">
    <location>
        <begin position="100"/>
        <end position="172"/>
    </location>
</feature>